<proteinExistence type="inferred from homology"/>
<protein>
    <recommendedName>
        <fullName evidence="1">Putative competence-damage inducible protein</fullName>
    </recommendedName>
</protein>
<feature type="chain" id="PRO_0000156779" description="Putative competence-damage inducible protein">
    <location>
        <begin position="1"/>
        <end position="423"/>
    </location>
</feature>
<organism>
    <name type="scientific">Streptococcus pyogenes serotype M6 (strain ATCC BAA-946 / MGAS10394)</name>
    <dbReference type="NCBI Taxonomy" id="286636"/>
    <lineage>
        <taxon>Bacteria</taxon>
        <taxon>Bacillati</taxon>
        <taxon>Bacillota</taxon>
        <taxon>Bacilli</taxon>
        <taxon>Lactobacillales</taxon>
        <taxon>Streptococcaceae</taxon>
        <taxon>Streptococcus</taxon>
    </lineage>
</organism>
<dbReference type="EMBL" id="CP000003">
    <property type="protein sequence ID" value="AAT87934.1"/>
    <property type="molecule type" value="Genomic_DNA"/>
</dbReference>
<dbReference type="RefSeq" id="WP_011185061.1">
    <property type="nucleotide sequence ID" value="NC_006086.1"/>
</dbReference>
<dbReference type="SMR" id="Q5X9H9"/>
<dbReference type="KEGG" id="spa:M6_Spy1799"/>
<dbReference type="HOGENOM" id="CLU_030805_9_3_9"/>
<dbReference type="Proteomes" id="UP000001167">
    <property type="component" value="Chromosome"/>
</dbReference>
<dbReference type="CDD" id="cd00885">
    <property type="entry name" value="cinA"/>
    <property type="match status" value="1"/>
</dbReference>
<dbReference type="Gene3D" id="3.30.70.2860">
    <property type="match status" value="1"/>
</dbReference>
<dbReference type="Gene3D" id="3.90.950.20">
    <property type="entry name" value="CinA-like"/>
    <property type="match status" value="1"/>
</dbReference>
<dbReference type="Gene3D" id="3.40.980.10">
    <property type="entry name" value="MoaB/Mog-like domain"/>
    <property type="match status" value="1"/>
</dbReference>
<dbReference type="HAMAP" id="MF_00226_B">
    <property type="entry name" value="CinA_B"/>
    <property type="match status" value="1"/>
</dbReference>
<dbReference type="InterPro" id="IPR050101">
    <property type="entry name" value="CinA"/>
</dbReference>
<dbReference type="InterPro" id="IPR036653">
    <property type="entry name" value="CinA-like_C"/>
</dbReference>
<dbReference type="InterPro" id="IPR008136">
    <property type="entry name" value="CinA_C"/>
</dbReference>
<dbReference type="InterPro" id="IPR041424">
    <property type="entry name" value="CinA_KH"/>
</dbReference>
<dbReference type="InterPro" id="IPR008135">
    <property type="entry name" value="Competence-induced_CinA"/>
</dbReference>
<dbReference type="InterPro" id="IPR036425">
    <property type="entry name" value="MoaB/Mog-like_dom_sf"/>
</dbReference>
<dbReference type="InterPro" id="IPR001453">
    <property type="entry name" value="MoaB/Mog_dom"/>
</dbReference>
<dbReference type="NCBIfam" id="TIGR00200">
    <property type="entry name" value="cinA_nterm"/>
    <property type="match status" value="1"/>
</dbReference>
<dbReference type="NCBIfam" id="TIGR00177">
    <property type="entry name" value="molyb_syn"/>
    <property type="match status" value="1"/>
</dbReference>
<dbReference type="NCBIfam" id="TIGR00199">
    <property type="entry name" value="PncC_domain"/>
    <property type="match status" value="1"/>
</dbReference>
<dbReference type="NCBIfam" id="NF001813">
    <property type="entry name" value="PRK00549.1"/>
    <property type="match status" value="1"/>
</dbReference>
<dbReference type="PANTHER" id="PTHR13939">
    <property type="entry name" value="NICOTINAMIDE-NUCLEOTIDE AMIDOHYDROLASE PNCC"/>
    <property type="match status" value="1"/>
</dbReference>
<dbReference type="PANTHER" id="PTHR13939:SF0">
    <property type="entry name" value="NMN AMIDOHYDROLASE-LIKE PROTEIN YFAY"/>
    <property type="match status" value="1"/>
</dbReference>
<dbReference type="Pfam" id="PF02464">
    <property type="entry name" value="CinA"/>
    <property type="match status" value="1"/>
</dbReference>
<dbReference type="Pfam" id="PF18146">
    <property type="entry name" value="CinA_KH"/>
    <property type="match status" value="1"/>
</dbReference>
<dbReference type="Pfam" id="PF00994">
    <property type="entry name" value="MoCF_biosynth"/>
    <property type="match status" value="1"/>
</dbReference>
<dbReference type="PIRSF" id="PIRSF006728">
    <property type="entry name" value="CinA"/>
    <property type="match status" value="1"/>
</dbReference>
<dbReference type="SMART" id="SM00852">
    <property type="entry name" value="MoCF_biosynth"/>
    <property type="match status" value="1"/>
</dbReference>
<dbReference type="SUPFAM" id="SSF142433">
    <property type="entry name" value="CinA-like"/>
    <property type="match status" value="1"/>
</dbReference>
<dbReference type="SUPFAM" id="SSF53218">
    <property type="entry name" value="Molybdenum cofactor biosynthesis proteins"/>
    <property type="match status" value="1"/>
</dbReference>
<reference key="1">
    <citation type="journal article" date="2004" name="J. Infect. Dis.">
        <title>Progress toward characterization of the group A Streptococcus metagenome: complete genome sequence of a macrolide-resistant serotype M6 strain.</title>
        <authorList>
            <person name="Banks D.J."/>
            <person name="Porcella S.F."/>
            <person name="Barbian K.D."/>
            <person name="Beres S.B."/>
            <person name="Philips L.E."/>
            <person name="Voyich J.M."/>
            <person name="DeLeo F.R."/>
            <person name="Martin J.M."/>
            <person name="Somerville G.A."/>
            <person name="Musser J.M."/>
        </authorList>
    </citation>
    <scope>NUCLEOTIDE SEQUENCE [LARGE SCALE GENOMIC DNA]</scope>
    <source>
        <strain>ATCC BAA-946 / MGAS10394</strain>
    </source>
</reference>
<gene>
    <name evidence="1" type="primary">cinA</name>
    <name type="ordered locus">M6_Spy1799</name>
</gene>
<sequence>MKAELIAVGTEILTGQIVNTNAQFLSEKMAELGIDVYFQTAVGDNEERLLSVITTASQRSDLVILCGGLGPTKDDLTKQTLAKYLRKDLVYDEQACQKLDDFFAKRKPSSRTPNNERQAQVIEGSIPLPNKTGLAVGGFITVDGISYVVLPGPPSELKSMVNEELVPLLSKQYSTLYSKVLRFFGVGESQLVTVLSDFIENQTDPTIAPYAKTGEVTLRLSTKTENQALADKKLGQLEAQLLSRKTLEGQPLADVFYGYGEDNSLARETFELLVKYDKTITAAESLTAGLFQSTLASFPGASQVFNGGFVAYSMEEKAKMLGLPLEELKSHGVVSAYTAEGMAEQARLLTGADIGVSLTGVAGPDMLEEQPAGTVFIGLATQTKVESIKVLISGQSRLDVRYIATLHAFNMVRKTLLKLENLL</sequence>
<comment type="similarity">
    <text evidence="1">Belongs to the CinA family.</text>
</comment>
<evidence type="ECO:0000255" key="1">
    <source>
        <dbReference type="HAMAP-Rule" id="MF_00226"/>
    </source>
</evidence>
<accession>Q5X9H9</accession>
<name>CINA_STRP6</name>